<keyword id="KW-0028">Amino-acid biosynthesis</keyword>
<keyword id="KW-0055">Arginine biosynthesis</keyword>
<keyword id="KW-0067">ATP-binding</keyword>
<keyword id="KW-0436">Ligase</keyword>
<keyword id="KW-0460">Magnesium</keyword>
<keyword id="KW-0464">Manganese</keyword>
<keyword id="KW-0479">Metal-binding</keyword>
<keyword id="KW-0547">Nucleotide-binding</keyword>
<keyword id="KW-0665">Pyrimidine biosynthesis</keyword>
<keyword id="KW-1185">Reference proteome</keyword>
<keyword id="KW-0677">Repeat</keyword>
<organism>
    <name type="scientific">Methanocaldococcus jannaschii (strain ATCC 43067 / DSM 2661 / JAL-1 / JCM 10045 / NBRC 100440)</name>
    <name type="common">Methanococcus jannaschii</name>
    <dbReference type="NCBI Taxonomy" id="243232"/>
    <lineage>
        <taxon>Archaea</taxon>
        <taxon>Methanobacteriati</taxon>
        <taxon>Methanobacteriota</taxon>
        <taxon>Methanomada group</taxon>
        <taxon>Methanococci</taxon>
        <taxon>Methanococcales</taxon>
        <taxon>Methanocaldococcaceae</taxon>
        <taxon>Methanocaldococcus</taxon>
    </lineage>
</organism>
<reference key="1">
    <citation type="journal article" date="1996" name="Science">
        <title>Complete genome sequence of the methanogenic archaeon, Methanococcus jannaschii.</title>
        <authorList>
            <person name="Bult C.J."/>
            <person name="White O."/>
            <person name="Olsen G.J."/>
            <person name="Zhou L."/>
            <person name="Fleischmann R.D."/>
            <person name="Sutton G.G."/>
            <person name="Blake J.A."/>
            <person name="FitzGerald L.M."/>
            <person name="Clayton R.A."/>
            <person name="Gocayne J.D."/>
            <person name="Kerlavage A.R."/>
            <person name="Dougherty B.A."/>
            <person name="Tomb J.-F."/>
            <person name="Adams M.D."/>
            <person name="Reich C.I."/>
            <person name="Overbeek R."/>
            <person name="Kirkness E.F."/>
            <person name="Weinstock K.G."/>
            <person name="Merrick J.M."/>
            <person name="Glodek A."/>
            <person name="Scott J.L."/>
            <person name="Geoghagen N.S.M."/>
            <person name="Weidman J.F."/>
            <person name="Fuhrmann J.L."/>
            <person name="Nguyen D."/>
            <person name="Utterback T.R."/>
            <person name="Kelley J.M."/>
            <person name="Peterson J.D."/>
            <person name="Sadow P.W."/>
            <person name="Hanna M.C."/>
            <person name="Cotton M.D."/>
            <person name="Roberts K.M."/>
            <person name="Hurst M.A."/>
            <person name="Kaine B.P."/>
            <person name="Borodovsky M."/>
            <person name="Klenk H.-P."/>
            <person name="Fraser C.M."/>
            <person name="Smith H.O."/>
            <person name="Woese C.R."/>
            <person name="Venter J.C."/>
        </authorList>
    </citation>
    <scope>NUCLEOTIDE SEQUENCE [LARGE SCALE GENOMIC DNA]</scope>
    <source>
        <strain>ATCC 43067 / DSM 2661 / JAL-1 / JCM 10045 / NBRC 100440</strain>
    </source>
</reference>
<comment type="function">
    <text evidence="1">Large subunit of the glutamine-dependent carbamoyl phosphate synthetase (CPSase). CPSase catalyzes the formation of carbamoyl phosphate from the ammonia moiety of glutamine, carbonate, and phosphate donated by ATP, constituting the first step of 2 biosynthetic pathways, one leading to arginine and/or urea and the other to pyrimidine nucleotides. The large subunit (synthetase) binds the substrates ammonia (free or transferred from glutamine from the small subunit), hydrogencarbonate and ATP and carries out an ATP-coupled ligase reaction, activating hydrogencarbonate by forming carboxy phosphate which reacts with ammonia to form carbamoyl phosphate.</text>
</comment>
<comment type="catalytic activity">
    <reaction evidence="1">
        <text>hydrogencarbonate + L-glutamine + 2 ATP + H2O = carbamoyl phosphate + L-glutamate + 2 ADP + phosphate + 2 H(+)</text>
        <dbReference type="Rhea" id="RHEA:18633"/>
        <dbReference type="ChEBI" id="CHEBI:15377"/>
        <dbReference type="ChEBI" id="CHEBI:15378"/>
        <dbReference type="ChEBI" id="CHEBI:17544"/>
        <dbReference type="ChEBI" id="CHEBI:29985"/>
        <dbReference type="ChEBI" id="CHEBI:30616"/>
        <dbReference type="ChEBI" id="CHEBI:43474"/>
        <dbReference type="ChEBI" id="CHEBI:58228"/>
        <dbReference type="ChEBI" id="CHEBI:58359"/>
        <dbReference type="ChEBI" id="CHEBI:456216"/>
        <dbReference type="EC" id="6.3.5.5"/>
    </reaction>
</comment>
<comment type="catalytic activity">
    <reaction evidence="1">
        <text>hydrogencarbonate + NH4(+) + 2 ATP = carbamoyl phosphate + 2 ADP + phosphate + 2 H(+)</text>
        <dbReference type="Rhea" id="RHEA:18029"/>
        <dbReference type="ChEBI" id="CHEBI:15378"/>
        <dbReference type="ChEBI" id="CHEBI:17544"/>
        <dbReference type="ChEBI" id="CHEBI:28938"/>
        <dbReference type="ChEBI" id="CHEBI:30616"/>
        <dbReference type="ChEBI" id="CHEBI:43474"/>
        <dbReference type="ChEBI" id="CHEBI:58228"/>
        <dbReference type="ChEBI" id="CHEBI:456216"/>
        <dbReference type="EC" id="6.3.4.16"/>
    </reaction>
</comment>
<comment type="cofactor">
    <cofactor evidence="1">
        <name>Mg(2+)</name>
        <dbReference type="ChEBI" id="CHEBI:18420"/>
    </cofactor>
    <cofactor evidence="1">
        <name>Mn(2+)</name>
        <dbReference type="ChEBI" id="CHEBI:29035"/>
    </cofactor>
    <text evidence="3">Binds 2 Mg(2+) or Mn(2+) ions per subunit.</text>
</comment>
<comment type="pathway">
    <text evidence="1">Amino-acid biosynthesis; L-arginine biosynthesis; carbamoyl phosphate from bicarbonate: step 1/1.</text>
</comment>
<comment type="pathway">
    <text evidence="1">Pyrimidine metabolism; UMP biosynthesis via de novo pathway; (S)-dihydroorotate from bicarbonate: step 1/3.</text>
</comment>
<comment type="subunit">
    <text evidence="1">Composed of two chains; the small (or glutamine) chain promotes the hydrolysis of glutamine to ammonia, which is used by the large (or ammonia) chain to synthesize carbamoyl phosphate. Tetramer of heterodimers (alpha,beta)4.</text>
</comment>
<comment type="domain">
    <text>Corresponds to the N-terminal section.</text>
</comment>
<comment type="domain">
    <text evidence="1">The large subunit is composed of 2 ATP-grasp domains that are involved in binding the 2 ATP molecules needed for carbamoyl phosphate synthesis. The N-terminal ATP-grasp domain (referred to as the carboxyphosphate synthetic component) catalyzes the ATP-dependent phosphorylation of hydrogencarbonate to carboxyphosphate and the subsequent nucleophilic attack by ammonia to form a carbamate intermediate. The C-terminal ATP-grasp domain (referred to as the carbamoyl phosphate synthetic component) then catalyzes the phosphorylation of carbamate with the second ATP to form the end product carbamoyl phosphate. The reactive and unstable enzyme intermediates are sequentially channeled from one active site to the next through the interior of the protein over a distance of at least 96 A.</text>
</comment>
<comment type="similarity">
    <text evidence="3">Belongs to the CarB family.</text>
</comment>
<comment type="caution">
    <text evidence="3">CarB is split into two genes in M.jannaschii (MJ1378 and MJ1381).</text>
</comment>
<feature type="chain" id="PRO_0000145075" description="Carbamoyl phosphate synthase large chain, N-terminal section">
    <location>
        <begin position="1"/>
        <end position="482"/>
    </location>
</feature>
<feature type="domain" description="ATP-grasp" evidence="1">
    <location>
        <begin position="130"/>
        <end position="324"/>
    </location>
</feature>
<feature type="region of interest" description="Carboxyphosphate synthetic domain" evidence="1">
    <location>
        <begin position="1"/>
        <end position="398"/>
    </location>
</feature>
<feature type="binding site" evidence="1">
    <location>
        <position position="126"/>
    </location>
    <ligand>
        <name>ATP</name>
        <dbReference type="ChEBI" id="CHEBI:30616"/>
        <label>1</label>
    </ligand>
</feature>
<feature type="binding site" evidence="1">
    <location>
        <position position="166"/>
    </location>
    <ligand>
        <name>ATP</name>
        <dbReference type="ChEBI" id="CHEBI:30616"/>
        <label>1</label>
    </ligand>
</feature>
<feature type="binding site" evidence="1">
    <location>
        <position position="172"/>
    </location>
    <ligand>
        <name>ATP</name>
        <dbReference type="ChEBI" id="CHEBI:30616"/>
        <label>1</label>
    </ligand>
</feature>
<feature type="binding site" evidence="1">
    <location>
        <position position="173"/>
    </location>
    <ligand>
        <name>ATP</name>
        <dbReference type="ChEBI" id="CHEBI:30616"/>
        <label>1</label>
    </ligand>
</feature>
<feature type="binding site" evidence="1">
    <location>
        <position position="205"/>
    </location>
    <ligand>
        <name>ATP</name>
        <dbReference type="ChEBI" id="CHEBI:30616"/>
        <label>1</label>
    </ligand>
</feature>
<feature type="binding site" evidence="1">
    <location>
        <position position="207"/>
    </location>
    <ligand>
        <name>ATP</name>
        <dbReference type="ChEBI" id="CHEBI:30616"/>
        <label>1</label>
    </ligand>
</feature>
<feature type="binding site" evidence="1">
    <location>
        <position position="212"/>
    </location>
    <ligand>
        <name>ATP</name>
        <dbReference type="ChEBI" id="CHEBI:30616"/>
        <label>1</label>
    </ligand>
</feature>
<feature type="binding site" evidence="1">
    <location>
        <position position="238"/>
    </location>
    <ligand>
        <name>ATP</name>
        <dbReference type="ChEBI" id="CHEBI:30616"/>
        <label>1</label>
    </ligand>
</feature>
<feature type="binding site" evidence="1">
    <location>
        <position position="239"/>
    </location>
    <ligand>
        <name>ATP</name>
        <dbReference type="ChEBI" id="CHEBI:30616"/>
        <label>1</label>
    </ligand>
</feature>
<feature type="binding site" evidence="1">
    <location>
        <position position="240"/>
    </location>
    <ligand>
        <name>ATP</name>
        <dbReference type="ChEBI" id="CHEBI:30616"/>
        <label>1</label>
    </ligand>
</feature>
<feature type="binding site" evidence="1">
    <location>
        <position position="281"/>
    </location>
    <ligand>
        <name>ATP</name>
        <dbReference type="ChEBI" id="CHEBI:30616"/>
        <label>1</label>
    </ligand>
</feature>
<feature type="binding site" evidence="2">
    <location>
        <position position="281"/>
    </location>
    <ligand>
        <name>Mg(2+)</name>
        <dbReference type="ChEBI" id="CHEBI:18420"/>
        <label>1</label>
    </ligand>
</feature>
<feature type="binding site" evidence="2">
    <location>
        <position position="281"/>
    </location>
    <ligand>
        <name>Mn(2+)</name>
        <dbReference type="ChEBI" id="CHEBI:29035"/>
        <label>1</label>
    </ligand>
</feature>
<feature type="binding site" evidence="1">
    <location>
        <position position="295"/>
    </location>
    <ligand>
        <name>ATP</name>
        <dbReference type="ChEBI" id="CHEBI:30616"/>
        <label>1</label>
    </ligand>
</feature>
<feature type="binding site" evidence="2">
    <location>
        <position position="295"/>
    </location>
    <ligand>
        <name>Mg(2+)</name>
        <dbReference type="ChEBI" id="CHEBI:18420"/>
        <label>1</label>
    </ligand>
</feature>
<feature type="binding site" evidence="2">
    <location>
        <position position="295"/>
    </location>
    <ligand>
        <name>Mg(2+)</name>
        <dbReference type="ChEBI" id="CHEBI:18420"/>
        <label>2</label>
    </ligand>
</feature>
<feature type="binding site" evidence="2">
    <location>
        <position position="295"/>
    </location>
    <ligand>
        <name>Mn(2+)</name>
        <dbReference type="ChEBI" id="CHEBI:29035"/>
        <label>1</label>
    </ligand>
</feature>
<feature type="binding site" evidence="2">
    <location>
        <position position="295"/>
    </location>
    <ligand>
        <name>Mn(2+)</name>
        <dbReference type="ChEBI" id="CHEBI:29035"/>
        <label>2</label>
    </ligand>
</feature>
<feature type="binding site" evidence="2">
    <location>
        <position position="297"/>
    </location>
    <ligand>
        <name>Mg(2+)</name>
        <dbReference type="ChEBI" id="CHEBI:18420"/>
        <label>2</label>
    </ligand>
</feature>
<feature type="binding site" evidence="2">
    <location>
        <position position="297"/>
    </location>
    <ligand>
        <name>Mn(2+)</name>
        <dbReference type="ChEBI" id="CHEBI:29035"/>
        <label>2</label>
    </ligand>
</feature>
<dbReference type="EC" id="6.3.4.16" evidence="1"/>
<dbReference type="EC" id="6.3.5.5" evidence="1"/>
<dbReference type="EMBL" id="L77117">
    <property type="protein sequence ID" value="AAB99385.1"/>
    <property type="molecule type" value="Genomic_DNA"/>
</dbReference>
<dbReference type="RefSeq" id="WP_010870895.1">
    <property type="nucleotide sequence ID" value="NC_000909.1"/>
</dbReference>
<dbReference type="SMR" id="Q58773"/>
<dbReference type="FunCoup" id="Q58773">
    <property type="interactions" value="113"/>
</dbReference>
<dbReference type="STRING" id="243232.MJ_1378"/>
<dbReference type="PaxDb" id="243232-MJ_1378"/>
<dbReference type="EnsemblBacteria" id="AAB99385">
    <property type="protein sequence ID" value="AAB99385"/>
    <property type="gene ID" value="MJ_1378"/>
</dbReference>
<dbReference type="GeneID" id="1452281"/>
<dbReference type="KEGG" id="mja:MJ_1378"/>
<dbReference type="eggNOG" id="arCOG01594">
    <property type="taxonomic scope" value="Archaea"/>
</dbReference>
<dbReference type="HOGENOM" id="CLU_000513_1_1_2"/>
<dbReference type="InParanoid" id="Q58773"/>
<dbReference type="OrthoDB" id="85487at2157"/>
<dbReference type="PhylomeDB" id="Q58773"/>
<dbReference type="UniPathway" id="UPA00068">
    <property type="reaction ID" value="UER00171"/>
</dbReference>
<dbReference type="UniPathway" id="UPA00070">
    <property type="reaction ID" value="UER00115"/>
</dbReference>
<dbReference type="Proteomes" id="UP000000805">
    <property type="component" value="Chromosome"/>
</dbReference>
<dbReference type="GO" id="GO:0005524">
    <property type="term" value="F:ATP binding"/>
    <property type="evidence" value="ECO:0007669"/>
    <property type="project" value="UniProtKB-KW"/>
</dbReference>
<dbReference type="GO" id="GO:0004087">
    <property type="term" value="F:carbamoyl-phosphate synthase (ammonia) activity"/>
    <property type="evidence" value="ECO:0007669"/>
    <property type="project" value="RHEA"/>
</dbReference>
<dbReference type="GO" id="GO:0004088">
    <property type="term" value="F:carbamoyl-phosphate synthase (glutamine-hydrolyzing) activity"/>
    <property type="evidence" value="ECO:0007669"/>
    <property type="project" value="UniProtKB-EC"/>
</dbReference>
<dbReference type="GO" id="GO:0046872">
    <property type="term" value="F:metal ion binding"/>
    <property type="evidence" value="ECO:0007669"/>
    <property type="project" value="UniProtKB-KW"/>
</dbReference>
<dbReference type="GO" id="GO:0044205">
    <property type="term" value="P:'de novo' UMP biosynthetic process"/>
    <property type="evidence" value="ECO:0007669"/>
    <property type="project" value="UniProtKB-UniPathway"/>
</dbReference>
<dbReference type="GO" id="GO:0006526">
    <property type="term" value="P:L-arginine biosynthetic process"/>
    <property type="evidence" value="ECO:0007669"/>
    <property type="project" value="UniProtKB-UniPathway"/>
</dbReference>
<dbReference type="FunFam" id="3.30.470.20:FF:000001">
    <property type="entry name" value="Carbamoyl-phosphate synthase large chain"/>
    <property type="match status" value="1"/>
</dbReference>
<dbReference type="FunFam" id="3.40.50.20:FF:000001">
    <property type="entry name" value="Carbamoyl-phosphate synthase large chain"/>
    <property type="match status" value="1"/>
</dbReference>
<dbReference type="Gene3D" id="3.40.50.20">
    <property type="match status" value="1"/>
</dbReference>
<dbReference type="Gene3D" id="3.30.470.20">
    <property type="entry name" value="ATP-grasp fold, B domain"/>
    <property type="match status" value="1"/>
</dbReference>
<dbReference type="Gene3D" id="1.10.1030.10">
    <property type="entry name" value="Carbamoyl-phosphate synthetase, large subunit oligomerisation domain"/>
    <property type="match status" value="1"/>
</dbReference>
<dbReference type="InterPro" id="IPR011761">
    <property type="entry name" value="ATP-grasp"/>
</dbReference>
<dbReference type="InterPro" id="IPR005480">
    <property type="entry name" value="CarbamoylP_synth_lsu_oligo"/>
</dbReference>
<dbReference type="InterPro" id="IPR036897">
    <property type="entry name" value="CarbamoylP_synth_lsu_oligo_sf"/>
</dbReference>
<dbReference type="InterPro" id="IPR005479">
    <property type="entry name" value="CbamoylP_synth_lsu-like_ATP-bd"/>
</dbReference>
<dbReference type="InterPro" id="IPR005483">
    <property type="entry name" value="CbamoylP_synth_lsu_CPSase_dom"/>
</dbReference>
<dbReference type="InterPro" id="IPR016185">
    <property type="entry name" value="PreATP-grasp_dom_sf"/>
</dbReference>
<dbReference type="NCBIfam" id="NF003671">
    <property type="entry name" value="PRK05294.1"/>
    <property type="match status" value="1"/>
</dbReference>
<dbReference type="PANTHER" id="PTHR11405:SF53">
    <property type="entry name" value="CARBAMOYL-PHOSPHATE SYNTHASE [AMMONIA], MITOCHONDRIAL"/>
    <property type="match status" value="1"/>
</dbReference>
<dbReference type="PANTHER" id="PTHR11405">
    <property type="entry name" value="CARBAMOYLTRANSFERASE FAMILY MEMBER"/>
    <property type="match status" value="1"/>
</dbReference>
<dbReference type="Pfam" id="PF02786">
    <property type="entry name" value="CPSase_L_D2"/>
    <property type="match status" value="1"/>
</dbReference>
<dbReference type="Pfam" id="PF02787">
    <property type="entry name" value="CPSase_L_D3"/>
    <property type="match status" value="1"/>
</dbReference>
<dbReference type="PRINTS" id="PR00098">
    <property type="entry name" value="CPSASE"/>
</dbReference>
<dbReference type="SMART" id="SM01096">
    <property type="entry name" value="CPSase_L_D3"/>
    <property type="match status" value="1"/>
</dbReference>
<dbReference type="SUPFAM" id="SSF48108">
    <property type="entry name" value="Carbamoyl phosphate synthetase, large subunit connection domain"/>
    <property type="match status" value="1"/>
</dbReference>
<dbReference type="SUPFAM" id="SSF56059">
    <property type="entry name" value="Glutathione synthetase ATP-binding domain-like"/>
    <property type="match status" value="1"/>
</dbReference>
<dbReference type="SUPFAM" id="SSF52440">
    <property type="entry name" value="PreATP-grasp domain"/>
    <property type="match status" value="1"/>
</dbReference>
<dbReference type="PROSITE" id="PS50975">
    <property type="entry name" value="ATP_GRASP"/>
    <property type="match status" value="1"/>
</dbReference>
<dbReference type="PROSITE" id="PS00866">
    <property type="entry name" value="CPSASE_1"/>
    <property type="match status" value="1"/>
</dbReference>
<dbReference type="PROSITE" id="PS00867">
    <property type="entry name" value="CPSASE_2"/>
    <property type="match status" value="1"/>
</dbReference>
<gene>
    <name type="primary">carB1</name>
    <name type="ordered locus">MJ1378</name>
</gene>
<sequence length="482" mass="53609">MESIKKVMVFGSGPIVIGQAAEFDFSGSQACKALKEEGIYTILVNSNPATIQTDTDMADKVYLEPLHPTIVEKIIEKERPDAILPTMGGQTGLNLALELHRRGILDKYGIKLLGSNIRTIEIAEDRELFAEAMAEINEPVTKCKAVNSVDEAVEFAEEIGYPVIVRPAFTLGGTGGGIAHNKEELIDITSKGLKYSIINQVLIDESVLGWKEFELEVMRDRKDTCIIVCGMENIDPMGIHTGESIVVSPIQTLPDEFYQKLRNAAIKIIRHLGIEGGCNIQFAVNKEMTEYRVIEVNPRVSRSSALASKATGYPIARIAAKIAIGKTLDEILNDVTKETPASFEPTLDYVVVKIPRWPFDKFKTVDKKLGTSMKSTGEVMAIGRSFEEALQKAIRSLDIGRFGIIGDGKDKDYTDEEIEEILKNPTDERIFVIAKALEKGWSVEKIVELTDIDEFFIKKIKNIVDMKKELEKLKEEIKKLNA</sequence>
<protein>
    <recommendedName>
        <fullName evidence="3">Carbamoyl phosphate synthase large chain, N-terminal section</fullName>
        <ecNumber evidence="1">6.3.4.16</ecNumber>
        <ecNumber evidence="1">6.3.5.5</ecNumber>
    </recommendedName>
    <alternativeName>
        <fullName>Carbamoyl phosphate synthetase ammonia chain</fullName>
    </alternativeName>
</protein>
<name>CARB1_METJA</name>
<accession>Q58773</accession>
<evidence type="ECO:0000250" key="1">
    <source>
        <dbReference type="UniProtKB" id="P00968"/>
    </source>
</evidence>
<evidence type="ECO:0000255" key="2">
    <source>
        <dbReference type="PROSITE-ProRule" id="PRU00409"/>
    </source>
</evidence>
<evidence type="ECO:0000305" key="3"/>
<proteinExistence type="inferred from homology"/>